<sequence>TGEKPFTCNECGKFFSCTSWLNVHLRSHTGEKPFTCSECGKFFSCMSRLKVHFRGHTGEKPSACTECEKCFSSISQRNIHIRSHTGDKSYTCTVCGKIFTRISQFNVHVRSHTGEKPFKCTECGKSFICNSQLNLHLRFHTGEKLTTCSECGKCFTHTSHLNVHFRVHTGEKPFTCTECGKCLTRQYQLTEHSYLHKGEKPYTCTECGKCFTRRYHLTEHSYLHTGEKPFTCTECGKGFTRRSHLKAHSHTH</sequence>
<feature type="chain" id="PRO_0000047790" description="Gastrula zinc finger protein XlCGF28.1">
    <location>
        <begin position="1" status="less than"/>
        <end position="252" status="greater than"/>
    </location>
</feature>
<feature type="zinc finger region" description="C2H2-type 1" evidence="1">
    <location>
        <begin position="6"/>
        <end position="28"/>
    </location>
</feature>
<feature type="zinc finger region" description="C2H2-type 2" evidence="1">
    <location>
        <begin position="34"/>
        <end position="56"/>
    </location>
</feature>
<feature type="zinc finger region" description="C2H2-type 3" evidence="1">
    <location>
        <begin position="62"/>
        <end position="84"/>
    </location>
</feature>
<feature type="zinc finger region" description="C2H2-type 4" evidence="1">
    <location>
        <begin position="90"/>
        <end position="112"/>
    </location>
</feature>
<feature type="zinc finger region" description="C2H2-type 5" evidence="1">
    <location>
        <begin position="118"/>
        <end position="140"/>
    </location>
</feature>
<feature type="zinc finger region" description="C2H2-type 6" evidence="1">
    <location>
        <begin position="146"/>
        <end position="168"/>
    </location>
</feature>
<feature type="zinc finger region" description="C2H2-type 7" evidence="1">
    <location>
        <begin position="174"/>
        <end position="196"/>
    </location>
</feature>
<feature type="zinc finger region" description="C2H2-type 8" evidence="1">
    <location>
        <begin position="202"/>
        <end position="224"/>
    </location>
</feature>
<feature type="zinc finger region" description="C2H2-type 9" evidence="1">
    <location>
        <begin position="230"/>
        <end position="252"/>
    </location>
</feature>
<feature type="non-terminal residue">
    <location>
        <position position="1"/>
    </location>
</feature>
<feature type="non-terminal residue">
    <location>
        <position position="252"/>
    </location>
</feature>
<reference key="1">
    <citation type="journal article" date="1989" name="J. Mol. Biol.">
        <title>Second-order repeats in Xenopus laevis finger proteins.</title>
        <authorList>
            <person name="Nietfeld W."/>
            <person name="El-Baradi T."/>
            <person name="Mentzel H."/>
            <person name="Pieler T."/>
            <person name="Koester M."/>
            <person name="Poeting A."/>
            <person name="Knoechel W."/>
        </authorList>
    </citation>
    <scope>NUCLEOTIDE SEQUENCE</scope>
</reference>
<protein>
    <recommendedName>
        <fullName>Gastrula zinc finger protein XlCGF28.1</fullName>
    </recommendedName>
</protein>
<name>ZG28_XENLA</name>
<dbReference type="PIR" id="S06567">
    <property type="entry name" value="S06567"/>
</dbReference>
<dbReference type="SMR" id="P18716"/>
<dbReference type="Proteomes" id="UP000186698">
    <property type="component" value="Unplaced"/>
</dbReference>
<dbReference type="GO" id="GO:0005634">
    <property type="term" value="C:nucleus"/>
    <property type="evidence" value="ECO:0000318"/>
    <property type="project" value="GO_Central"/>
</dbReference>
<dbReference type="GO" id="GO:0001228">
    <property type="term" value="F:DNA-binding transcription activator activity, RNA polymerase II-specific"/>
    <property type="evidence" value="ECO:0000318"/>
    <property type="project" value="GO_Central"/>
</dbReference>
<dbReference type="GO" id="GO:0000978">
    <property type="term" value="F:RNA polymerase II cis-regulatory region sequence-specific DNA binding"/>
    <property type="evidence" value="ECO:0000318"/>
    <property type="project" value="GO_Central"/>
</dbReference>
<dbReference type="GO" id="GO:0008270">
    <property type="term" value="F:zinc ion binding"/>
    <property type="evidence" value="ECO:0007669"/>
    <property type="project" value="UniProtKB-KW"/>
</dbReference>
<dbReference type="GO" id="GO:0006357">
    <property type="term" value="P:regulation of transcription by RNA polymerase II"/>
    <property type="evidence" value="ECO:0000318"/>
    <property type="project" value="GO_Central"/>
</dbReference>
<dbReference type="FunFam" id="3.30.160.60:FF:000100">
    <property type="entry name" value="Zinc finger 45-like"/>
    <property type="match status" value="1"/>
</dbReference>
<dbReference type="FunFam" id="3.30.160.60:FF:000755">
    <property type="entry name" value="zinc finger protein 174"/>
    <property type="match status" value="1"/>
</dbReference>
<dbReference type="FunFam" id="3.30.160.60:FF:000663">
    <property type="entry name" value="Zinc finger protein 45"/>
    <property type="match status" value="1"/>
</dbReference>
<dbReference type="FunFam" id="3.30.160.60:FF:001891">
    <property type="entry name" value="Zinc finger protein 527"/>
    <property type="match status" value="1"/>
</dbReference>
<dbReference type="FunFam" id="3.30.160.60:FF:001465">
    <property type="entry name" value="Zinc finger protein 560"/>
    <property type="match status" value="1"/>
</dbReference>
<dbReference type="FunFam" id="3.30.160.60:FF:000912">
    <property type="entry name" value="Zinc finger protein 660"/>
    <property type="match status" value="3"/>
</dbReference>
<dbReference type="FunFam" id="3.30.160.60:FF:000624">
    <property type="entry name" value="zinc finger protein 697"/>
    <property type="match status" value="1"/>
</dbReference>
<dbReference type="Gene3D" id="3.30.160.60">
    <property type="entry name" value="Classic Zinc Finger"/>
    <property type="match status" value="9"/>
</dbReference>
<dbReference type="InterPro" id="IPR050758">
    <property type="entry name" value="Znf_C2H2-type"/>
</dbReference>
<dbReference type="InterPro" id="IPR036236">
    <property type="entry name" value="Znf_C2H2_sf"/>
</dbReference>
<dbReference type="InterPro" id="IPR013087">
    <property type="entry name" value="Znf_C2H2_type"/>
</dbReference>
<dbReference type="PANTHER" id="PTHR23234:SF8">
    <property type="entry name" value="C2H2-TYPE DOMAIN-CONTAINING PROTEIN"/>
    <property type="match status" value="1"/>
</dbReference>
<dbReference type="PANTHER" id="PTHR23234">
    <property type="entry name" value="ZNF44 PROTEIN"/>
    <property type="match status" value="1"/>
</dbReference>
<dbReference type="Pfam" id="PF00096">
    <property type="entry name" value="zf-C2H2"/>
    <property type="match status" value="8"/>
</dbReference>
<dbReference type="SMART" id="SM00355">
    <property type="entry name" value="ZnF_C2H2"/>
    <property type="match status" value="9"/>
</dbReference>
<dbReference type="SUPFAM" id="SSF57667">
    <property type="entry name" value="beta-beta-alpha zinc fingers"/>
    <property type="match status" value="5"/>
</dbReference>
<dbReference type="PROSITE" id="PS00028">
    <property type="entry name" value="ZINC_FINGER_C2H2_1"/>
    <property type="match status" value="9"/>
</dbReference>
<dbReference type="PROSITE" id="PS50157">
    <property type="entry name" value="ZINC_FINGER_C2H2_2"/>
    <property type="match status" value="9"/>
</dbReference>
<accession>P18716</accession>
<comment type="function">
    <text>May be involved in transcriptional regulation.</text>
</comment>
<comment type="subcellular location">
    <subcellularLocation>
        <location evidence="2">Nucleus</location>
    </subcellularLocation>
</comment>
<comment type="similarity">
    <text evidence="2">Belongs to the krueppel C2H2-type zinc-finger protein family.</text>
</comment>
<organism>
    <name type="scientific">Xenopus laevis</name>
    <name type="common">African clawed frog</name>
    <dbReference type="NCBI Taxonomy" id="8355"/>
    <lineage>
        <taxon>Eukaryota</taxon>
        <taxon>Metazoa</taxon>
        <taxon>Chordata</taxon>
        <taxon>Craniata</taxon>
        <taxon>Vertebrata</taxon>
        <taxon>Euteleostomi</taxon>
        <taxon>Amphibia</taxon>
        <taxon>Batrachia</taxon>
        <taxon>Anura</taxon>
        <taxon>Pipoidea</taxon>
        <taxon>Pipidae</taxon>
        <taxon>Xenopodinae</taxon>
        <taxon>Xenopus</taxon>
        <taxon>Xenopus</taxon>
    </lineage>
</organism>
<keyword id="KW-0238">DNA-binding</keyword>
<keyword id="KW-0479">Metal-binding</keyword>
<keyword id="KW-0539">Nucleus</keyword>
<keyword id="KW-1185">Reference proteome</keyword>
<keyword id="KW-0677">Repeat</keyword>
<keyword id="KW-0804">Transcription</keyword>
<keyword id="KW-0805">Transcription regulation</keyword>
<keyword id="KW-0862">Zinc</keyword>
<keyword id="KW-0863">Zinc-finger</keyword>
<evidence type="ECO:0000255" key="1">
    <source>
        <dbReference type="PROSITE-ProRule" id="PRU00042"/>
    </source>
</evidence>
<evidence type="ECO:0000305" key="2"/>
<proteinExistence type="inferred from homology"/>